<proteinExistence type="evidence at protein level"/>
<keyword id="KW-0997">Cell inner membrane</keyword>
<keyword id="KW-1003">Cell membrane</keyword>
<keyword id="KW-0472">Membrane</keyword>
<keyword id="KW-1185">Reference proteome</keyword>
<keyword id="KW-0812">Transmembrane</keyword>
<keyword id="KW-1133">Transmembrane helix</keyword>
<keyword id="KW-0813">Transport</keyword>
<dbReference type="EMBL" id="AE004091">
    <property type="protein sequence ID" value="AAG08553.1"/>
    <property type="molecule type" value="Genomic_DNA"/>
</dbReference>
<dbReference type="PIR" id="A83001">
    <property type="entry name" value="A83001"/>
</dbReference>
<dbReference type="RefSeq" id="NP_253855.1">
    <property type="nucleotide sequence ID" value="NC_002516.2"/>
</dbReference>
<dbReference type="RefSeq" id="WP_003105527.1">
    <property type="nucleotide sequence ID" value="NZ_QZGE01000002.1"/>
</dbReference>
<dbReference type="SMR" id="Q9HU17"/>
<dbReference type="STRING" id="208964.PA5168"/>
<dbReference type="PaxDb" id="208964-PA5168"/>
<dbReference type="DNASU" id="877772"/>
<dbReference type="GeneID" id="77223700"/>
<dbReference type="GeneID" id="877772"/>
<dbReference type="KEGG" id="pae:PA5168"/>
<dbReference type="PATRIC" id="fig|208964.12.peg.5416"/>
<dbReference type="PseudoCAP" id="PA5168"/>
<dbReference type="HOGENOM" id="CLU_086356_3_2_6"/>
<dbReference type="InParanoid" id="Q9HU17"/>
<dbReference type="OrthoDB" id="9791324at2"/>
<dbReference type="PhylomeDB" id="Q9HU17"/>
<dbReference type="BioCyc" id="PAER208964:G1FZ6-5285-MONOMER"/>
<dbReference type="Proteomes" id="UP000002438">
    <property type="component" value="Chromosome"/>
</dbReference>
<dbReference type="GO" id="GO:0005886">
    <property type="term" value="C:plasma membrane"/>
    <property type="evidence" value="ECO:0000318"/>
    <property type="project" value="GO_Central"/>
</dbReference>
<dbReference type="GO" id="GO:0022857">
    <property type="term" value="F:transmembrane transporter activity"/>
    <property type="evidence" value="ECO:0000318"/>
    <property type="project" value="GO_Central"/>
</dbReference>
<dbReference type="GO" id="GO:0015740">
    <property type="term" value="P:C4-dicarboxylate transport"/>
    <property type="evidence" value="ECO:0000315"/>
    <property type="project" value="PseudoCAP"/>
</dbReference>
<dbReference type="InterPro" id="IPR055348">
    <property type="entry name" value="DctQ"/>
</dbReference>
<dbReference type="InterPro" id="IPR007387">
    <property type="entry name" value="TRAP_DctQ"/>
</dbReference>
<dbReference type="PANTHER" id="PTHR35011">
    <property type="entry name" value="2,3-DIKETO-L-GULONATE TRAP TRANSPORTER SMALL PERMEASE PROTEIN YIAM"/>
    <property type="match status" value="1"/>
</dbReference>
<dbReference type="PANTHER" id="PTHR35011:SF2">
    <property type="entry name" value="2,3-DIKETO-L-GULONATE TRAP TRANSPORTER SMALL PERMEASE PROTEIN YIAM"/>
    <property type="match status" value="1"/>
</dbReference>
<dbReference type="Pfam" id="PF04290">
    <property type="entry name" value="DctQ"/>
    <property type="match status" value="1"/>
</dbReference>
<evidence type="ECO:0000250" key="1">
    <source>
        <dbReference type="UniProtKB" id="O07837"/>
    </source>
</evidence>
<evidence type="ECO:0000255" key="2"/>
<evidence type="ECO:0000269" key="3">
    <source>
    </source>
</evidence>
<evidence type="ECO:0000303" key="4">
    <source>
    </source>
</evidence>
<evidence type="ECO:0000305" key="5"/>
<evidence type="ECO:0000305" key="6">
    <source>
    </source>
</evidence>
<evidence type="ECO:0000312" key="7">
    <source>
        <dbReference type="EMBL" id="AAG08553.1"/>
    </source>
</evidence>
<name>DCTQ_PSEAE</name>
<feature type="chain" id="PRO_0000435381" description="C4-dicarboxylate TRAP transporter small permease protein DctQ">
    <location>
        <begin position="1"/>
        <end position="210"/>
    </location>
</feature>
<feature type="transmembrane region" description="Helical" evidence="2">
    <location>
        <begin position="13"/>
        <end position="33"/>
    </location>
</feature>
<feature type="transmembrane region" description="Helical" evidence="2">
    <location>
        <begin position="77"/>
        <end position="97"/>
    </location>
</feature>
<feature type="transmembrane region" description="Helical" evidence="2">
    <location>
        <begin position="113"/>
        <end position="133"/>
    </location>
</feature>
<feature type="transmembrane region" description="Helical" evidence="2">
    <location>
        <begin position="160"/>
        <end position="180"/>
    </location>
</feature>
<organism>
    <name type="scientific">Pseudomonas aeruginosa (strain ATCC 15692 / DSM 22644 / CIP 104116 / JCM 14847 / LMG 12228 / 1C / PRS 101 / PAO1)</name>
    <dbReference type="NCBI Taxonomy" id="208964"/>
    <lineage>
        <taxon>Bacteria</taxon>
        <taxon>Pseudomonadati</taxon>
        <taxon>Pseudomonadota</taxon>
        <taxon>Gammaproteobacteria</taxon>
        <taxon>Pseudomonadales</taxon>
        <taxon>Pseudomonadaceae</taxon>
        <taxon>Pseudomonas</taxon>
    </lineage>
</organism>
<comment type="function">
    <text evidence="3">Part of the tripartite ATP-independent periplasmic (TRAP) transport system DctPQM involved in C4-dicarboxylates uptake.</text>
</comment>
<comment type="subunit">
    <text evidence="6">The complex comprises the extracytoplasmic solute receptor protein DctP, and the two transmembrane proteins DctQ and DctM.</text>
</comment>
<comment type="subcellular location">
    <subcellularLocation>
        <location evidence="1">Cell inner membrane</location>
        <topology evidence="2">Multi-pass membrane protein</topology>
    </subcellularLocation>
</comment>
<comment type="induction">
    <text evidence="3">Expression is maximal in early exponential growth phase and declines with cell density to reach a plateau in the stationary growth phase. Induced by the C(4)-dicarboxylates succinate, fumarate and malate. Positively regulated by RpoN and the DctB/DctD two-component system. Negatively regulated by DctA.</text>
</comment>
<comment type="disruption phenotype">
    <text evidence="3">The dctA-dctPQM double mutant shows no growth on malate and fumarate and residual growth on succinate.</text>
</comment>
<comment type="miscellaneous">
    <text evidence="3">The DctPQM carrier is more efficient than the DctA carrier for the utilization of succinate at micromolar concentrations, whereas DctA is the major transporter at millimolar concentrations.</text>
</comment>
<comment type="similarity">
    <text evidence="5">Belongs to the TRAP transporter small permease family.</text>
</comment>
<gene>
    <name evidence="4" type="primary">dctQ</name>
    <name evidence="7" type="ordered locus">PA5168</name>
</gene>
<protein>
    <recommendedName>
        <fullName evidence="5">C4-dicarboxylate TRAP transporter small permease protein DctQ</fullName>
    </recommendedName>
</protein>
<reference key="1">
    <citation type="journal article" date="2000" name="Nature">
        <title>Complete genome sequence of Pseudomonas aeruginosa PAO1, an opportunistic pathogen.</title>
        <authorList>
            <person name="Stover C.K."/>
            <person name="Pham X.-Q.T."/>
            <person name="Erwin A.L."/>
            <person name="Mizoguchi S.D."/>
            <person name="Warrener P."/>
            <person name="Hickey M.J."/>
            <person name="Brinkman F.S.L."/>
            <person name="Hufnagle W.O."/>
            <person name="Kowalik D.J."/>
            <person name="Lagrou M."/>
            <person name="Garber R.L."/>
            <person name="Goltry L."/>
            <person name="Tolentino E."/>
            <person name="Westbrock-Wadman S."/>
            <person name="Yuan Y."/>
            <person name="Brody L.L."/>
            <person name="Coulter S.N."/>
            <person name="Folger K.R."/>
            <person name="Kas A."/>
            <person name="Larbig K."/>
            <person name="Lim R.M."/>
            <person name="Smith K.A."/>
            <person name="Spencer D.H."/>
            <person name="Wong G.K.-S."/>
            <person name="Wu Z."/>
            <person name="Paulsen I.T."/>
            <person name="Reizer J."/>
            <person name="Saier M.H. Jr."/>
            <person name="Hancock R.E.W."/>
            <person name="Lory S."/>
            <person name="Olson M.V."/>
        </authorList>
    </citation>
    <scope>NUCLEOTIDE SEQUENCE [LARGE SCALE GENOMIC DNA]</scope>
    <source>
        <strain>ATCC 15692 / DSM 22644 / CIP 104116 / JCM 14847 / LMG 12228 / 1C / PRS 101 / PAO1</strain>
    </source>
</reference>
<reference key="2">
    <citation type="journal article" date="2011" name="J. Bacteriol.">
        <title>Identification of C(4)-dicarboxylate transport systems in Pseudomonas aeruginosa PAO1.</title>
        <authorList>
            <person name="Valentini M."/>
            <person name="Storelli N."/>
            <person name="Lapouge K."/>
        </authorList>
    </citation>
    <scope>FUNCTION</scope>
    <scope>SUBUNIT</scope>
    <scope>INDUCTION</scope>
    <scope>DISRUPTION PHENOTYPE</scope>
    <source>
        <strain>ATCC 15692 / DSM 22644 / CIP 104116 / JCM 14847 / LMG 12228 / 1C / PRS 101 / PAO1</strain>
    </source>
</reference>
<sequence>MHALARVWARLEEGLIAFLLAAMTLVTFVYVVLNNLYTLLYDLADLWEGGNETLLAIGDGVLTLAQEMTWSNALTKALFAWLIFLGIAYGVRTAGHLGVDVLVKLASRPVQRVLGVIACLACLGYAGLLCVASYDWVKTLFIAGIGAEDLDHFGIRQWHIGLIVPVGFALVFIRFAEILVRILRNRQTGLGLADEAADALKLTEHEEPKA</sequence>
<accession>Q9HU17</accession>